<name>U3IP2_MOUSE</name>
<gene>
    <name type="primary">Rrp9</name>
    <name type="synonym">Rnu3ip2</name>
    <name type="synonym">U3-55k</name>
</gene>
<proteinExistence type="evidence at protein level"/>
<protein>
    <recommendedName>
        <fullName>U3 small nucleolar RNA-interacting protein 2</fullName>
    </recommendedName>
    <alternativeName>
        <fullName>RRP9 homolog</fullName>
    </alternativeName>
    <alternativeName>
        <fullName>U3 small nucleolar ribonucleoprotein-associated 55 kDa protein</fullName>
        <shortName>U3 snoRNP-associated 55 kDa protein</shortName>
        <shortName>U3-55K</shortName>
    </alternativeName>
</protein>
<organism>
    <name type="scientific">Mus musculus</name>
    <name type="common">Mouse</name>
    <dbReference type="NCBI Taxonomy" id="10090"/>
    <lineage>
        <taxon>Eukaryota</taxon>
        <taxon>Metazoa</taxon>
        <taxon>Chordata</taxon>
        <taxon>Craniata</taxon>
        <taxon>Vertebrata</taxon>
        <taxon>Euteleostomi</taxon>
        <taxon>Mammalia</taxon>
        <taxon>Eutheria</taxon>
        <taxon>Euarchontoglires</taxon>
        <taxon>Glires</taxon>
        <taxon>Rodentia</taxon>
        <taxon>Myomorpha</taxon>
        <taxon>Muroidea</taxon>
        <taxon>Muridae</taxon>
        <taxon>Murinae</taxon>
        <taxon>Mus</taxon>
        <taxon>Mus</taxon>
    </lineage>
</organism>
<evidence type="ECO:0000250" key="1">
    <source>
        <dbReference type="UniProtKB" id="O43818"/>
    </source>
</evidence>
<evidence type="ECO:0000255" key="2"/>
<evidence type="ECO:0000256" key="3">
    <source>
        <dbReference type="SAM" id="MobiDB-lite"/>
    </source>
</evidence>
<evidence type="ECO:0000305" key="4"/>
<evidence type="ECO:0007744" key="5">
    <source>
    </source>
</evidence>
<evidence type="ECO:0007744" key="6">
    <source>
    </source>
</evidence>
<evidence type="ECO:0007744" key="7">
    <source>
    </source>
</evidence>
<evidence type="ECO:0007744" key="8">
    <source>
    </source>
</evidence>
<sequence length="475" mass="52107">MSTAVATRKRAKPAPGPGAAPVAGKRRRKVDSAADRGKSKGGGKMNEEISSDSESESLAPRKTEEEEEEELEETAQEKKLRLAKLYLEQLRQQEEEKAEARAFEEDQVAGRLKEDVLEQRGRLQKSVAKEIQAPAPTDIRVLRGHQLSITCLVITPDDLAIFSAAKDCTIIKWSVETGRKLHVIPRAKKGAQGQPAGHSSHVLCMAISSDGKYLASGDRSKLILIWEAQSCQHLYTFTGHRDAVSGLAFRKGTHQLYSTSHDRSVKVWNAAENSYVETLFGHQDAVAALDALSRECCVTAGGRDGTVRVWKIPEESQLVFYGHQGSIDCIHLINEEHMVSGADDGSVALWGLSKKRPLALQREAHGLHGEPGLEQPFWVSSVAALLNTDLVATGSHNARVRLWQCGEGFRQLDPLCDIPLVGFINSLKFSSAGDFLVAGVGQEHRLGRWWRIKEARNSVCIIPLRRLPVSPVAGS</sequence>
<reference key="1">
    <citation type="journal article" date="2002" name="Folia Biol. (Praha)">
        <title>Cloning and expression of PARP-3 (Adprt3) and U3-55k, two genes closely linked on mouse chromosome 9.</title>
        <authorList>
            <person name="Urbanek P."/>
            <person name="Paces J."/>
            <person name="Kralova J."/>
            <person name="Dvorak M."/>
            <person name="Paces V."/>
        </authorList>
    </citation>
    <scope>NUCLEOTIDE SEQUENCE [GENOMIC DNA / MRNA]</scope>
    <source>
        <strain>C57BL/6J</strain>
    </source>
</reference>
<reference key="2">
    <citation type="journal article" date="2005" name="Science">
        <title>The transcriptional landscape of the mammalian genome.</title>
        <authorList>
            <person name="Carninci P."/>
            <person name="Kasukawa T."/>
            <person name="Katayama S."/>
            <person name="Gough J."/>
            <person name="Frith M.C."/>
            <person name="Maeda N."/>
            <person name="Oyama R."/>
            <person name="Ravasi T."/>
            <person name="Lenhard B."/>
            <person name="Wells C."/>
            <person name="Kodzius R."/>
            <person name="Shimokawa K."/>
            <person name="Bajic V.B."/>
            <person name="Brenner S.E."/>
            <person name="Batalov S."/>
            <person name="Forrest A.R."/>
            <person name="Zavolan M."/>
            <person name="Davis M.J."/>
            <person name="Wilming L.G."/>
            <person name="Aidinis V."/>
            <person name="Allen J.E."/>
            <person name="Ambesi-Impiombato A."/>
            <person name="Apweiler R."/>
            <person name="Aturaliya R.N."/>
            <person name="Bailey T.L."/>
            <person name="Bansal M."/>
            <person name="Baxter L."/>
            <person name="Beisel K.W."/>
            <person name="Bersano T."/>
            <person name="Bono H."/>
            <person name="Chalk A.M."/>
            <person name="Chiu K.P."/>
            <person name="Choudhary V."/>
            <person name="Christoffels A."/>
            <person name="Clutterbuck D.R."/>
            <person name="Crowe M.L."/>
            <person name="Dalla E."/>
            <person name="Dalrymple B.P."/>
            <person name="de Bono B."/>
            <person name="Della Gatta G."/>
            <person name="di Bernardo D."/>
            <person name="Down T."/>
            <person name="Engstrom P."/>
            <person name="Fagiolini M."/>
            <person name="Faulkner G."/>
            <person name="Fletcher C.F."/>
            <person name="Fukushima T."/>
            <person name="Furuno M."/>
            <person name="Futaki S."/>
            <person name="Gariboldi M."/>
            <person name="Georgii-Hemming P."/>
            <person name="Gingeras T.R."/>
            <person name="Gojobori T."/>
            <person name="Green R.E."/>
            <person name="Gustincich S."/>
            <person name="Harbers M."/>
            <person name="Hayashi Y."/>
            <person name="Hensch T.K."/>
            <person name="Hirokawa N."/>
            <person name="Hill D."/>
            <person name="Huminiecki L."/>
            <person name="Iacono M."/>
            <person name="Ikeo K."/>
            <person name="Iwama A."/>
            <person name="Ishikawa T."/>
            <person name="Jakt M."/>
            <person name="Kanapin A."/>
            <person name="Katoh M."/>
            <person name="Kawasawa Y."/>
            <person name="Kelso J."/>
            <person name="Kitamura H."/>
            <person name="Kitano H."/>
            <person name="Kollias G."/>
            <person name="Krishnan S.P."/>
            <person name="Kruger A."/>
            <person name="Kummerfeld S.K."/>
            <person name="Kurochkin I.V."/>
            <person name="Lareau L.F."/>
            <person name="Lazarevic D."/>
            <person name="Lipovich L."/>
            <person name="Liu J."/>
            <person name="Liuni S."/>
            <person name="McWilliam S."/>
            <person name="Madan Babu M."/>
            <person name="Madera M."/>
            <person name="Marchionni L."/>
            <person name="Matsuda H."/>
            <person name="Matsuzawa S."/>
            <person name="Miki H."/>
            <person name="Mignone F."/>
            <person name="Miyake S."/>
            <person name="Morris K."/>
            <person name="Mottagui-Tabar S."/>
            <person name="Mulder N."/>
            <person name="Nakano N."/>
            <person name="Nakauchi H."/>
            <person name="Ng P."/>
            <person name="Nilsson R."/>
            <person name="Nishiguchi S."/>
            <person name="Nishikawa S."/>
            <person name="Nori F."/>
            <person name="Ohara O."/>
            <person name="Okazaki Y."/>
            <person name="Orlando V."/>
            <person name="Pang K.C."/>
            <person name="Pavan W.J."/>
            <person name="Pavesi G."/>
            <person name="Pesole G."/>
            <person name="Petrovsky N."/>
            <person name="Piazza S."/>
            <person name="Reed J."/>
            <person name="Reid J.F."/>
            <person name="Ring B.Z."/>
            <person name="Ringwald M."/>
            <person name="Rost B."/>
            <person name="Ruan Y."/>
            <person name="Salzberg S.L."/>
            <person name="Sandelin A."/>
            <person name="Schneider C."/>
            <person name="Schoenbach C."/>
            <person name="Sekiguchi K."/>
            <person name="Semple C.A."/>
            <person name="Seno S."/>
            <person name="Sessa L."/>
            <person name="Sheng Y."/>
            <person name="Shibata Y."/>
            <person name="Shimada H."/>
            <person name="Shimada K."/>
            <person name="Silva D."/>
            <person name="Sinclair B."/>
            <person name="Sperling S."/>
            <person name="Stupka E."/>
            <person name="Sugiura K."/>
            <person name="Sultana R."/>
            <person name="Takenaka Y."/>
            <person name="Taki K."/>
            <person name="Tammoja K."/>
            <person name="Tan S.L."/>
            <person name="Tang S."/>
            <person name="Taylor M.S."/>
            <person name="Tegner J."/>
            <person name="Teichmann S.A."/>
            <person name="Ueda H.R."/>
            <person name="van Nimwegen E."/>
            <person name="Verardo R."/>
            <person name="Wei C.L."/>
            <person name="Yagi K."/>
            <person name="Yamanishi H."/>
            <person name="Zabarovsky E."/>
            <person name="Zhu S."/>
            <person name="Zimmer A."/>
            <person name="Hide W."/>
            <person name="Bult C."/>
            <person name="Grimmond S.M."/>
            <person name="Teasdale R.D."/>
            <person name="Liu E.T."/>
            <person name="Brusic V."/>
            <person name="Quackenbush J."/>
            <person name="Wahlestedt C."/>
            <person name="Mattick J.S."/>
            <person name="Hume D.A."/>
            <person name="Kai C."/>
            <person name="Sasaki D."/>
            <person name="Tomaru Y."/>
            <person name="Fukuda S."/>
            <person name="Kanamori-Katayama M."/>
            <person name="Suzuki M."/>
            <person name="Aoki J."/>
            <person name="Arakawa T."/>
            <person name="Iida J."/>
            <person name="Imamura K."/>
            <person name="Itoh M."/>
            <person name="Kato T."/>
            <person name="Kawaji H."/>
            <person name="Kawagashira N."/>
            <person name="Kawashima T."/>
            <person name="Kojima M."/>
            <person name="Kondo S."/>
            <person name="Konno H."/>
            <person name="Nakano K."/>
            <person name="Ninomiya N."/>
            <person name="Nishio T."/>
            <person name="Okada M."/>
            <person name="Plessy C."/>
            <person name="Shibata K."/>
            <person name="Shiraki T."/>
            <person name="Suzuki S."/>
            <person name="Tagami M."/>
            <person name="Waki K."/>
            <person name="Watahiki A."/>
            <person name="Okamura-Oho Y."/>
            <person name="Suzuki H."/>
            <person name="Kawai J."/>
            <person name="Hayashizaki Y."/>
        </authorList>
    </citation>
    <scope>NUCLEOTIDE SEQUENCE [LARGE SCALE MRNA]</scope>
    <source>
        <strain>C57BL/6J</strain>
        <tissue>Embryo</tissue>
    </source>
</reference>
<reference key="3">
    <citation type="journal article" date="2004" name="Genome Res.">
        <title>The status, quality, and expansion of the NIH full-length cDNA project: the Mammalian Gene Collection (MGC).</title>
        <authorList>
            <consortium name="The MGC Project Team"/>
        </authorList>
    </citation>
    <scope>NUCLEOTIDE SEQUENCE [LARGE SCALE MRNA]</scope>
    <source>
        <tissue>Kidney</tissue>
    </source>
</reference>
<reference key="4">
    <citation type="journal article" date="2007" name="Proc. Natl. Acad. Sci. U.S.A.">
        <title>Large-scale phosphorylation analysis of mouse liver.</title>
        <authorList>
            <person name="Villen J."/>
            <person name="Beausoleil S.A."/>
            <person name="Gerber S.A."/>
            <person name="Gygi S.P."/>
        </authorList>
    </citation>
    <scope>PHOSPHORYLATION [LARGE SCALE ANALYSIS] AT SER-470</scope>
    <scope>IDENTIFICATION BY MASS SPECTROMETRY [LARGE SCALE ANALYSIS]</scope>
    <source>
        <tissue>Liver</tissue>
    </source>
</reference>
<reference key="5">
    <citation type="journal article" date="2009" name="Immunity">
        <title>The phagosomal proteome in interferon-gamma-activated macrophages.</title>
        <authorList>
            <person name="Trost M."/>
            <person name="English L."/>
            <person name="Lemieux S."/>
            <person name="Courcelles M."/>
            <person name="Desjardins M."/>
            <person name="Thibault P."/>
        </authorList>
    </citation>
    <scope>PHOSPHORYLATION [LARGE SCALE ANALYSIS] AT SER-50; SER-51; SER-53 AND SER-470</scope>
    <scope>IDENTIFICATION BY MASS SPECTROMETRY [LARGE SCALE ANALYSIS]</scope>
</reference>
<reference key="6">
    <citation type="journal article" date="2009" name="Mol. Cell. Proteomics">
        <title>Large scale localization of protein phosphorylation by use of electron capture dissociation mass spectrometry.</title>
        <authorList>
            <person name="Sweet S.M."/>
            <person name="Bailey C.M."/>
            <person name="Cunningham D.L."/>
            <person name="Heath J.K."/>
            <person name="Cooper H.J."/>
        </authorList>
    </citation>
    <scope>PHOSPHORYLATION [LARGE SCALE ANALYSIS] AT SER-470</scope>
    <scope>IDENTIFICATION BY MASS SPECTROMETRY [LARGE SCALE ANALYSIS]</scope>
    <source>
        <tissue>Embryonic fibroblast</tissue>
    </source>
</reference>
<reference key="7">
    <citation type="journal article" date="2010" name="Cell">
        <title>A tissue-specific atlas of mouse protein phosphorylation and expression.</title>
        <authorList>
            <person name="Huttlin E.L."/>
            <person name="Jedrychowski M.P."/>
            <person name="Elias J.E."/>
            <person name="Goswami T."/>
            <person name="Rad R."/>
            <person name="Beausoleil S.A."/>
            <person name="Villen J."/>
            <person name="Haas W."/>
            <person name="Sowa M.E."/>
            <person name="Gygi S.P."/>
        </authorList>
    </citation>
    <scope>PHOSPHORYLATION [LARGE SCALE ANALYSIS] AT SER-50; SER-51; SER-53 AND SER-470</scope>
    <scope>IDENTIFICATION BY MASS SPECTROMETRY [LARGE SCALE ANALYSIS]</scope>
    <source>
        <tissue>Kidney</tissue>
        <tissue>Liver</tissue>
        <tissue>Pancreas</tissue>
        <tissue>Spleen</tissue>
        <tissue>Testis</tissue>
    </source>
</reference>
<comment type="function">
    <text evidence="1">Component of a nucleolar small nuclear ribonucleoprotein particle (snoRNP) thought to participate in the processing and modification of pre-ribosomal RNA (pre-rRNA). Part of the small subunit (SSU) processome, first precursor of the small eukaryotic ribosomal subunit. During the assembly of the SSU processome in the nucleolus, many ribosome biogenesis factors, an RNA chaperone and ribosomal proteins associate with the nascent pre-rRNA and work in concert to generate RNA folding, modifications, rearrangements and cleavage as well as targeted degradation of pre-ribosomal RNA by the RNA exosome.</text>
</comment>
<comment type="subunit">
    <text evidence="1">Interacts specifically with the U3 small nucleolar RNA (U3 snoRNA). Binds a sub-fragment of the U3 snoRNA surrounding the B/C motif (3UBC). This association with the U3BC RNA is dependent on the binding of a protein called 15.5K to the box B/C motif. The association of the protein with the U3BC RNA was found to be also dependent on a conserved RNA structure that flanks the box B/C motif. Part of the small subunit (SSU) processome, composed of more than 70 proteins and the RNA chaperone small nucleolar RNA (snoRNA) U3.</text>
</comment>
<comment type="subcellular location">
    <subcellularLocation>
        <location evidence="1">Nucleus</location>
        <location evidence="1">Nucleolus</location>
    </subcellularLocation>
</comment>
<comment type="domain">
    <text evidence="1">The WD domains are required for nucleolar localization and U3 small nucleolar RNAs binding.</text>
</comment>
<comment type="PTM">
    <text evidence="1">Acetylation at Lys-12 and Lys-25 by KAT2B/PCAF under stress impairs pre-rRNA processing. Deacetylation by SIRT7 enhances RRP9-binding to U3 snoRNA, which is a prerequisite for pre-rRNA processing.</text>
</comment>
<comment type="similarity">
    <text evidence="4">Belongs to the WD repeat RRP9 family.</text>
</comment>
<accession>Q91WM3</accession>
<accession>Q8CFB7</accession>
<dbReference type="EMBL" id="AF368232">
    <property type="protein sequence ID" value="AAN62792.1"/>
    <property type="molecule type" value="mRNA"/>
</dbReference>
<dbReference type="EMBL" id="AF368234">
    <property type="protein sequence ID" value="AAN62794.1"/>
    <property type="molecule type" value="Genomic_DNA"/>
</dbReference>
<dbReference type="EMBL" id="AK076113">
    <property type="protein sequence ID" value="BAC36193.1"/>
    <property type="molecule type" value="mRNA"/>
</dbReference>
<dbReference type="EMBL" id="BC014703">
    <property type="protein sequence ID" value="AAH14703.1"/>
    <property type="molecule type" value="mRNA"/>
</dbReference>
<dbReference type="CCDS" id="CCDS23481.1"/>
<dbReference type="RefSeq" id="NP_663595.1">
    <property type="nucleotide sequence ID" value="NM_145620.4"/>
</dbReference>
<dbReference type="SMR" id="Q91WM3"/>
<dbReference type="BioGRID" id="205694">
    <property type="interactions" value="5"/>
</dbReference>
<dbReference type="FunCoup" id="Q91WM3">
    <property type="interactions" value="2132"/>
</dbReference>
<dbReference type="IntAct" id="Q91WM3">
    <property type="interactions" value="1"/>
</dbReference>
<dbReference type="MINT" id="Q91WM3"/>
<dbReference type="STRING" id="10090.ENSMUSP00000038580"/>
<dbReference type="GlyGen" id="Q91WM3">
    <property type="glycosylation" value="1 site, 1 O-linked glycan (1 site)"/>
</dbReference>
<dbReference type="iPTMnet" id="Q91WM3"/>
<dbReference type="PhosphoSitePlus" id="Q91WM3"/>
<dbReference type="jPOST" id="Q91WM3"/>
<dbReference type="PaxDb" id="10090-ENSMUSP00000038580"/>
<dbReference type="PeptideAtlas" id="Q91WM3"/>
<dbReference type="ProteomicsDB" id="298444"/>
<dbReference type="Pumba" id="Q91WM3"/>
<dbReference type="Antibodypedia" id="14210">
    <property type="antibodies" value="83 antibodies from 22 providers"/>
</dbReference>
<dbReference type="DNASU" id="27966"/>
<dbReference type="Ensembl" id="ENSMUST00000047721.10">
    <property type="protein sequence ID" value="ENSMUSP00000038580.9"/>
    <property type="gene ID" value="ENSMUSG00000041506.16"/>
</dbReference>
<dbReference type="GeneID" id="27966"/>
<dbReference type="KEGG" id="mmu:27966"/>
<dbReference type="UCSC" id="uc009rkb.1">
    <property type="organism name" value="mouse"/>
</dbReference>
<dbReference type="AGR" id="MGI:2384313"/>
<dbReference type="CTD" id="9136"/>
<dbReference type="MGI" id="MGI:2384313">
    <property type="gene designation" value="Rrp9"/>
</dbReference>
<dbReference type="VEuPathDB" id="HostDB:ENSMUSG00000041506"/>
<dbReference type="eggNOG" id="KOG0299">
    <property type="taxonomic scope" value="Eukaryota"/>
</dbReference>
<dbReference type="GeneTree" id="ENSGT00940000158328"/>
<dbReference type="HOGENOM" id="CLU_014017_1_1_1"/>
<dbReference type="InParanoid" id="Q91WM3"/>
<dbReference type="OMA" id="CSLRIWK"/>
<dbReference type="OrthoDB" id="189968at2759"/>
<dbReference type="PhylomeDB" id="Q91WM3"/>
<dbReference type="TreeFam" id="TF105828"/>
<dbReference type="Reactome" id="R-MMU-6791226">
    <property type="pathway name" value="Major pathway of rRNA processing in the nucleolus and cytosol"/>
</dbReference>
<dbReference type="BioGRID-ORCS" id="27966">
    <property type="hits" value="27 hits in 80 CRISPR screens"/>
</dbReference>
<dbReference type="ChiTaRS" id="Rrp9">
    <property type="organism name" value="mouse"/>
</dbReference>
<dbReference type="PRO" id="PR:Q91WM3"/>
<dbReference type="Proteomes" id="UP000000589">
    <property type="component" value="Chromosome 9"/>
</dbReference>
<dbReference type="RNAct" id="Q91WM3">
    <property type="molecule type" value="protein"/>
</dbReference>
<dbReference type="Bgee" id="ENSMUSG00000041506">
    <property type="expression patterns" value="Expressed in embryonic brain and 175 other cell types or tissues"/>
</dbReference>
<dbReference type="ExpressionAtlas" id="Q91WM3">
    <property type="expression patterns" value="baseline and differential"/>
</dbReference>
<dbReference type="GO" id="GO:0031428">
    <property type="term" value="C:box C/D methylation guide snoRNP complex"/>
    <property type="evidence" value="ECO:0007669"/>
    <property type="project" value="Ensembl"/>
</dbReference>
<dbReference type="GO" id="GO:0005730">
    <property type="term" value="C:nucleolus"/>
    <property type="evidence" value="ECO:0000250"/>
    <property type="project" value="UniProtKB"/>
</dbReference>
<dbReference type="GO" id="GO:0032040">
    <property type="term" value="C:small-subunit processome"/>
    <property type="evidence" value="ECO:0000250"/>
    <property type="project" value="UniProtKB"/>
</dbReference>
<dbReference type="GO" id="GO:0034511">
    <property type="term" value="F:U3 snoRNA binding"/>
    <property type="evidence" value="ECO:0000250"/>
    <property type="project" value="UniProtKB"/>
</dbReference>
<dbReference type="GO" id="GO:0042274">
    <property type="term" value="P:ribosomal small subunit biogenesis"/>
    <property type="evidence" value="ECO:0000250"/>
    <property type="project" value="UniProtKB"/>
</dbReference>
<dbReference type="GO" id="GO:0006364">
    <property type="term" value="P:rRNA processing"/>
    <property type="evidence" value="ECO:0000250"/>
    <property type="project" value="UniProtKB"/>
</dbReference>
<dbReference type="CDD" id="cd00200">
    <property type="entry name" value="WD40"/>
    <property type="match status" value="1"/>
</dbReference>
<dbReference type="FunFam" id="2.130.10.10:FF:000143">
    <property type="entry name" value="U3 small nucleolar RNA-interacting protein 2 isoform X2"/>
    <property type="match status" value="1"/>
</dbReference>
<dbReference type="Gene3D" id="2.130.10.10">
    <property type="entry name" value="YVTN repeat-like/Quinoprotein amine dehydrogenase"/>
    <property type="match status" value="1"/>
</dbReference>
<dbReference type="InterPro" id="IPR020472">
    <property type="entry name" value="G-protein_beta_WD-40_rep"/>
</dbReference>
<dbReference type="InterPro" id="IPR039241">
    <property type="entry name" value="Rrp9-like"/>
</dbReference>
<dbReference type="InterPro" id="IPR015943">
    <property type="entry name" value="WD40/YVTN_repeat-like_dom_sf"/>
</dbReference>
<dbReference type="InterPro" id="IPR036322">
    <property type="entry name" value="WD40_repeat_dom_sf"/>
</dbReference>
<dbReference type="InterPro" id="IPR001680">
    <property type="entry name" value="WD40_rpt"/>
</dbReference>
<dbReference type="PANTHER" id="PTHR19865">
    <property type="entry name" value="U3 SMALL NUCLEOLAR RNA INTERACTING PROTEIN 2"/>
    <property type="match status" value="1"/>
</dbReference>
<dbReference type="PANTHER" id="PTHR19865:SF0">
    <property type="entry name" value="U3 SMALL NUCLEOLAR RNA-INTERACTING PROTEIN 2"/>
    <property type="match status" value="1"/>
</dbReference>
<dbReference type="Pfam" id="PF00400">
    <property type="entry name" value="WD40"/>
    <property type="match status" value="5"/>
</dbReference>
<dbReference type="PRINTS" id="PR00320">
    <property type="entry name" value="GPROTEINBRPT"/>
</dbReference>
<dbReference type="SMART" id="SM00320">
    <property type="entry name" value="WD40"/>
    <property type="match status" value="6"/>
</dbReference>
<dbReference type="SUPFAM" id="SSF50978">
    <property type="entry name" value="WD40 repeat-like"/>
    <property type="match status" value="1"/>
</dbReference>
<dbReference type="PROSITE" id="PS00678">
    <property type="entry name" value="WD_REPEATS_1"/>
    <property type="match status" value="1"/>
</dbReference>
<dbReference type="PROSITE" id="PS50082">
    <property type="entry name" value="WD_REPEATS_2"/>
    <property type="match status" value="5"/>
</dbReference>
<dbReference type="PROSITE" id="PS50294">
    <property type="entry name" value="WD_REPEATS_REGION"/>
    <property type="match status" value="1"/>
</dbReference>
<feature type="chain" id="PRO_0000051314" description="U3 small nucleolar RNA-interacting protein 2">
    <location>
        <begin position="1"/>
        <end position="475"/>
    </location>
</feature>
<feature type="repeat" description="WD 1">
    <location>
        <begin position="144"/>
        <end position="183"/>
    </location>
</feature>
<feature type="repeat" description="WD 2">
    <location>
        <begin position="197"/>
        <end position="236"/>
    </location>
</feature>
<feature type="repeat" description="WD 3">
    <location>
        <begin position="239"/>
        <end position="278"/>
    </location>
</feature>
<feature type="repeat" description="WD 4">
    <location>
        <begin position="281"/>
        <end position="320"/>
    </location>
</feature>
<feature type="repeat" description="WD 5">
    <location>
        <begin position="322"/>
        <end position="360"/>
    </location>
</feature>
<feature type="repeat" description="WD 6">
    <location>
        <begin position="374"/>
        <end position="413"/>
    </location>
</feature>
<feature type="repeat" description="WD 7">
    <location>
        <begin position="419"/>
        <end position="460"/>
    </location>
</feature>
<feature type="region of interest" description="Disordered" evidence="3">
    <location>
        <begin position="1"/>
        <end position="75"/>
    </location>
</feature>
<feature type="short sequence motif" description="Nuclear localization signal" evidence="2">
    <location>
        <begin position="8"/>
        <end position="40"/>
    </location>
</feature>
<feature type="compositionally biased region" description="Acidic residues" evidence="3">
    <location>
        <begin position="65"/>
        <end position="74"/>
    </location>
</feature>
<feature type="modified residue" description="Omega-N-methylarginine" evidence="1">
    <location>
        <position position="10"/>
    </location>
</feature>
<feature type="modified residue" description="N6-acetyllysine" evidence="1">
    <location>
        <position position="12"/>
    </location>
</feature>
<feature type="modified residue" description="N6-acetyllysine" evidence="1">
    <location>
        <position position="25"/>
    </location>
</feature>
<feature type="modified residue" description="Phosphoserine" evidence="7 8">
    <location>
        <position position="50"/>
    </location>
</feature>
<feature type="modified residue" description="Phosphoserine" evidence="7 8">
    <location>
        <position position="51"/>
    </location>
</feature>
<feature type="modified residue" description="Phosphoserine" evidence="7 8">
    <location>
        <position position="53"/>
    </location>
</feature>
<feature type="modified residue" description="Phosphoserine" evidence="1">
    <location>
        <position position="57"/>
    </location>
</feature>
<feature type="modified residue" description="Phosphoserine" evidence="5 6 7 8">
    <location>
        <position position="470"/>
    </location>
</feature>
<feature type="cross-link" description="Glycyl lysine isopeptide (Lys-Gly) (interchain with G-Cter in SUMO2)" evidence="1">
    <location>
        <position position="113"/>
    </location>
</feature>
<keyword id="KW-0007">Acetylation</keyword>
<keyword id="KW-1017">Isopeptide bond</keyword>
<keyword id="KW-0488">Methylation</keyword>
<keyword id="KW-0539">Nucleus</keyword>
<keyword id="KW-0597">Phosphoprotein</keyword>
<keyword id="KW-1185">Reference proteome</keyword>
<keyword id="KW-0677">Repeat</keyword>
<keyword id="KW-0687">Ribonucleoprotein</keyword>
<keyword id="KW-0694">RNA-binding</keyword>
<keyword id="KW-0698">rRNA processing</keyword>
<keyword id="KW-0832">Ubl conjugation</keyword>
<keyword id="KW-0853">WD repeat</keyword>